<keyword id="KW-0963">Cytoplasm</keyword>
<keyword id="KW-0251">Elongation factor</keyword>
<keyword id="KW-0342">GTP-binding</keyword>
<keyword id="KW-0547">Nucleotide-binding</keyword>
<keyword id="KW-0648">Protein biosynthesis</keyword>
<keyword id="KW-1185">Reference proteome</keyword>
<comment type="function">
    <text evidence="1">Catalyzes the GTP-dependent ribosomal translocation step during translation elongation. During this step, the ribosome changes from the pre-translocational (PRE) to the post-translocational (POST) state as the newly formed A-site-bound peptidyl-tRNA and P-site-bound deacylated tRNA move to the P and E sites, respectively. Catalyzes the coordinated movement of the two tRNA molecules, the mRNA and conformational changes in the ribosome.</text>
</comment>
<comment type="subcellular location">
    <subcellularLocation>
        <location evidence="1">Cytoplasm</location>
    </subcellularLocation>
</comment>
<comment type="similarity">
    <text evidence="1">Belongs to the TRAFAC class translation factor GTPase superfamily. Classic translation factor GTPase family. EF-G/EF-2 subfamily.</text>
</comment>
<organism>
    <name type="scientific">Desulfitobacterium hafniense (strain Y51)</name>
    <dbReference type="NCBI Taxonomy" id="138119"/>
    <lineage>
        <taxon>Bacteria</taxon>
        <taxon>Bacillati</taxon>
        <taxon>Bacillota</taxon>
        <taxon>Clostridia</taxon>
        <taxon>Eubacteriales</taxon>
        <taxon>Desulfitobacteriaceae</taxon>
        <taxon>Desulfitobacterium</taxon>
    </lineage>
</organism>
<protein>
    <recommendedName>
        <fullName evidence="1">Elongation factor G</fullName>
        <shortName evidence="1">EF-G</shortName>
    </recommendedName>
</protein>
<feature type="chain" id="PRO_0000263446" description="Elongation factor G">
    <location>
        <begin position="1"/>
        <end position="692"/>
    </location>
</feature>
<feature type="domain" description="tr-type G">
    <location>
        <begin position="8"/>
        <end position="282"/>
    </location>
</feature>
<feature type="region of interest" description="Disordered" evidence="2">
    <location>
        <begin position="285"/>
        <end position="304"/>
    </location>
</feature>
<feature type="compositionally biased region" description="Basic and acidic residues" evidence="2">
    <location>
        <begin position="290"/>
        <end position="304"/>
    </location>
</feature>
<feature type="binding site" evidence="1">
    <location>
        <begin position="17"/>
        <end position="24"/>
    </location>
    <ligand>
        <name>GTP</name>
        <dbReference type="ChEBI" id="CHEBI:37565"/>
    </ligand>
</feature>
<feature type="binding site" evidence="1">
    <location>
        <begin position="81"/>
        <end position="85"/>
    </location>
    <ligand>
        <name>GTP</name>
        <dbReference type="ChEBI" id="CHEBI:37565"/>
    </ligand>
</feature>
<feature type="binding site" evidence="1">
    <location>
        <begin position="135"/>
        <end position="138"/>
    </location>
    <ligand>
        <name>GTP</name>
        <dbReference type="ChEBI" id="CHEBI:37565"/>
    </ligand>
</feature>
<gene>
    <name evidence="1" type="primary">fusA</name>
    <name type="ordered locus">DSY0468</name>
</gene>
<proteinExistence type="inferred from homology"/>
<sequence>MARQFPLEKTRNIGIMAHIDAGKTTTTERILFYTGRVHKIGEVHDGAATMDWMVQEQERGITITSAATTAQWKGHRINIIDTPGHVDFTVEVERSLRVLDGAVAVFCSVGGVEPQSETVWRQADKYGVPRIAYINKMDRMGADFFRGVSMIADRLGANPVPIQIPIGAEDQFKGIIDLVTMKAMVYTDDLGTTSDTADIPGDLVDQANEYREKLLEAVADTDEELMMKYLEGEELTEEEIRNGIRKGTIGLKFIPVVCGSSFKNKGVQPLLDAVVEYMPAPTDVPNIKGVHPETGEADERHSSDKDPFSALAFKIMADPYVGKLAFFRVYSGVLSSGSYVYNSTKGKRERIGRILQMHANHREEIPEVYAGDIAAAVGLKDTTTGDTLCDDKAPIILESMQFPDPVINVAIEPKTKQDQEKMGTALARLAEEDPTFKMHTDQDSGQTIIEGMGELHLEIIVDRLQREFKVECNVGRPQVAYKETIRRAVKAEGKFVRQSGGRGQYGHCWIEIEPLEQGSGFEFVNKIVGGVIPREYIAPIGQGIEEAMQNGIQAGYPVMDIRATVYDGSYHDVDSSEMAFKIAGSMAFKAGAAKADPAIIEPVMKVEVTVPEEYMGEVIGDMNSRRGRIEGMEATGTAQIVRGFVPLSEMFGYATDLRSKTQGRGVYVMMFDHYEEVPKNIAEGIVAKRAGA</sequence>
<evidence type="ECO:0000255" key="1">
    <source>
        <dbReference type="HAMAP-Rule" id="MF_00054"/>
    </source>
</evidence>
<evidence type="ECO:0000256" key="2">
    <source>
        <dbReference type="SAM" id="MobiDB-lite"/>
    </source>
</evidence>
<reference key="1">
    <citation type="journal article" date="2006" name="J. Bacteriol.">
        <title>Complete genome sequence of the dehalorespiring bacterium Desulfitobacterium hafniense Y51 and comparison with Dehalococcoides ethenogenes 195.</title>
        <authorList>
            <person name="Nonaka H."/>
            <person name="Keresztes G."/>
            <person name="Shinoda Y."/>
            <person name="Ikenaga Y."/>
            <person name="Abe M."/>
            <person name="Naito K."/>
            <person name="Inatomi K."/>
            <person name="Furukawa K."/>
            <person name="Inui M."/>
            <person name="Yukawa H."/>
        </authorList>
    </citation>
    <scope>NUCLEOTIDE SEQUENCE [LARGE SCALE GENOMIC DNA]</scope>
    <source>
        <strain>Y51</strain>
    </source>
</reference>
<dbReference type="EMBL" id="AP008230">
    <property type="protein sequence ID" value="BAE82257.1"/>
    <property type="molecule type" value="Genomic_DNA"/>
</dbReference>
<dbReference type="RefSeq" id="WP_011459098.1">
    <property type="nucleotide sequence ID" value="NC_007907.1"/>
</dbReference>
<dbReference type="SMR" id="Q250N5"/>
<dbReference type="STRING" id="138119.DSY0468"/>
<dbReference type="KEGG" id="dsy:DSY0468"/>
<dbReference type="eggNOG" id="COG0480">
    <property type="taxonomic scope" value="Bacteria"/>
</dbReference>
<dbReference type="HOGENOM" id="CLU_002794_4_1_9"/>
<dbReference type="Proteomes" id="UP000001946">
    <property type="component" value="Chromosome"/>
</dbReference>
<dbReference type="GO" id="GO:0005737">
    <property type="term" value="C:cytoplasm"/>
    <property type="evidence" value="ECO:0007669"/>
    <property type="project" value="UniProtKB-SubCell"/>
</dbReference>
<dbReference type="GO" id="GO:0005525">
    <property type="term" value="F:GTP binding"/>
    <property type="evidence" value="ECO:0007669"/>
    <property type="project" value="UniProtKB-UniRule"/>
</dbReference>
<dbReference type="GO" id="GO:0003924">
    <property type="term" value="F:GTPase activity"/>
    <property type="evidence" value="ECO:0007669"/>
    <property type="project" value="InterPro"/>
</dbReference>
<dbReference type="GO" id="GO:0003746">
    <property type="term" value="F:translation elongation factor activity"/>
    <property type="evidence" value="ECO:0007669"/>
    <property type="project" value="UniProtKB-UniRule"/>
</dbReference>
<dbReference type="GO" id="GO:0032790">
    <property type="term" value="P:ribosome disassembly"/>
    <property type="evidence" value="ECO:0007669"/>
    <property type="project" value="TreeGrafter"/>
</dbReference>
<dbReference type="CDD" id="cd01886">
    <property type="entry name" value="EF-G"/>
    <property type="match status" value="1"/>
</dbReference>
<dbReference type="CDD" id="cd16262">
    <property type="entry name" value="EFG_III"/>
    <property type="match status" value="1"/>
</dbReference>
<dbReference type="CDD" id="cd01434">
    <property type="entry name" value="EFG_mtEFG1_IV"/>
    <property type="match status" value="1"/>
</dbReference>
<dbReference type="CDD" id="cd03713">
    <property type="entry name" value="EFG_mtEFG_C"/>
    <property type="match status" value="1"/>
</dbReference>
<dbReference type="CDD" id="cd04088">
    <property type="entry name" value="EFG_mtEFG_II"/>
    <property type="match status" value="1"/>
</dbReference>
<dbReference type="FunFam" id="2.40.30.10:FF:000006">
    <property type="entry name" value="Elongation factor G"/>
    <property type="match status" value="1"/>
</dbReference>
<dbReference type="FunFam" id="3.30.230.10:FF:000003">
    <property type="entry name" value="Elongation factor G"/>
    <property type="match status" value="1"/>
</dbReference>
<dbReference type="FunFam" id="3.30.70.240:FF:000001">
    <property type="entry name" value="Elongation factor G"/>
    <property type="match status" value="1"/>
</dbReference>
<dbReference type="FunFam" id="3.30.70.870:FF:000001">
    <property type="entry name" value="Elongation factor G"/>
    <property type="match status" value="1"/>
</dbReference>
<dbReference type="FunFam" id="3.40.50.300:FF:000029">
    <property type="entry name" value="Elongation factor G"/>
    <property type="match status" value="1"/>
</dbReference>
<dbReference type="Gene3D" id="3.30.230.10">
    <property type="match status" value="1"/>
</dbReference>
<dbReference type="Gene3D" id="3.30.70.240">
    <property type="match status" value="1"/>
</dbReference>
<dbReference type="Gene3D" id="3.30.70.870">
    <property type="entry name" value="Elongation Factor G (Translational Gtpase), domain 3"/>
    <property type="match status" value="1"/>
</dbReference>
<dbReference type="Gene3D" id="3.40.50.300">
    <property type="entry name" value="P-loop containing nucleotide triphosphate hydrolases"/>
    <property type="match status" value="1"/>
</dbReference>
<dbReference type="Gene3D" id="2.40.30.10">
    <property type="entry name" value="Translation factors"/>
    <property type="match status" value="1"/>
</dbReference>
<dbReference type="HAMAP" id="MF_00054_B">
    <property type="entry name" value="EF_G_EF_2_B"/>
    <property type="match status" value="1"/>
</dbReference>
<dbReference type="InterPro" id="IPR041095">
    <property type="entry name" value="EFG_II"/>
</dbReference>
<dbReference type="InterPro" id="IPR009022">
    <property type="entry name" value="EFG_III"/>
</dbReference>
<dbReference type="InterPro" id="IPR035647">
    <property type="entry name" value="EFG_III/V"/>
</dbReference>
<dbReference type="InterPro" id="IPR047872">
    <property type="entry name" value="EFG_IV"/>
</dbReference>
<dbReference type="InterPro" id="IPR035649">
    <property type="entry name" value="EFG_V"/>
</dbReference>
<dbReference type="InterPro" id="IPR000640">
    <property type="entry name" value="EFG_V-like"/>
</dbReference>
<dbReference type="InterPro" id="IPR004161">
    <property type="entry name" value="EFTu-like_2"/>
</dbReference>
<dbReference type="InterPro" id="IPR031157">
    <property type="entry name" value="G_TR_CS"/>
</dbReference>
<dbReference type="InterPro" id="IPR027417">
    <property type="entry name" value="P-loop_NTPase"/>
</dbReference>
<dbReference type="InterPro" id="IPR020568">
    <property type="entry name" value="Ribosomal_Su5_D2-typ_SF"/>
</dbReference>
<dbReference type="InterPro" id="IPR014721">
    <property type="entry name" value="Ribsml_uS5_D2-typ_fold_subgr"/>
</dbReference>
<dbReference type="InterPro" id="IPR005225">
    <property type="entry name" value="Small_GTP-bd"/>
</dbReference>
<dbReference type="InterPro" id="IPR000795">
    <property type="entry name" value="T_Tr_GTP-bd_dom"/>
</dbReference>
<dbReference type="InterPro" id="IPR009000">
    <property type="entry name" value="Transl_B-barrel_sf"/>
</dbReference>
<dbReference type="InterPro" id="IPR004540">
    <property type="entry name" value="Transl_elong_EFG/EF2"/>
</dbReference>
<dbReference type="InterPro" id="IPR005517">
    <property type="entry name" value="Transl_elong_EFG/EF2_IV"/>
</dbReference>
<dbReference type="NCBIfam" id="TIGR00484">
    <property type="entry name" value="EF-G"/>
    <property type="match status" value="1"/>
</dbReference>
<dbReference type="NCBIfam" id="NF009379">
    <property type="entry name" value="PRK12740.1-3"/>
    <property type="match status" value="1"/>
</dbReference>
<dbReference type="NCBIfam" id="NF009381">
    <property type="entry name" value="PRK12740.1-5"/>
    <property type="match status" value="1"/>
</dbReference>
<dbReference type="NCBIfam" id="TIGR00231">
    <property type="entry name" value="small_GTP"/>
    <property type="match status" value="1"/>
</dbReference>
<dbReference type="PANTHER" id="PTHR43261:SF1">
    <property type="entry name" value="RIBOSOME-RELEASING FACTOR 2, MITOCHONDRIAL"/>
    <property type="match status" value="1"/>
</dbReference>
<dbReference type="PANTHER" id="PTHR43261">
    <property type="entry name" value="TRANSLATION ELONGATION FACTOR G-RELATED"/>
    <property type="match status" value="1"/>
</dbReference>
<dbReference type="Pfam" id="PF00679">
    <property type="entry name" value="EFG_C"/>
    <property type="match status" value="1"/>
</dbReference>
<dbReference type="Pfam" id="PF14492">
    <property type="entry name" value="EFG_III"/>
    <property type="match status" value="1"/>
</dbReference>
<dbReference type="Pfam" id="PF03764">
    <property type="entry name" value="EFG_IV"/>
    <property type="match status" value="1"/>
</dbReference>
<dbReference type="Pfam" id="PF00009">
    <property type="entry name" value="GTP_EFTU"/>
    <property type="match status" value="1"/>
</dbReference>
<dbReference type="Pfam" id="PF03144">
    <property type="entry name" value="GTP_EFTU_D2"/>
    <property type="match status" value="1"/>
</dbReference>
<dbReference type="PRINTS" id="PR00315">
    <property type="entry name" value="ELONGATNFCT"/>
</dbReference>
<dbReference type="SMART" id="SM00838">
    <property type="entry name" value="EFG_C"/>
    <property type="match status" value="1"/>
</dbReference>
<dbReference type="SMART" id="SM00889">
    <property type="entry name" value="EFG_IV"/>
    <property type="match status" value="1"/>
</dbReference>
<dbReference type="SUPFAM" id="SSF54980">
    <property type="entry name" value="EF-G C-terminal domain-like"/>
    <property type="match status" value="2"/>
</dbReference>
<dbReference type="SUPFAM" id="SSF52540">
    <property type="entry name" value="P-loop containing nucleoside triphosphate hydrolases"/>
    <property type="match status" value="1"/>
</dbReference>
<dbReference type="SUPFAM" id="SSF54211">
    <property type="entry name" value="Ribosomal protein S5 domain 2-like"/>
    <property type="match status" value="1"/>
</dbReference>
<dbReference type="SUPFAM" id="SSF50447">
    <property type="entry name" value="Translation proteins"/>
    <property type="match status" value="1"/>
</dbReference>
<dbReference type="PROSITE" id="PS00301">
    <property type="entry name" value="G_TR_1"/>
    <property type="match status" value="1"/>
</dbReference>
<dbReference type="PROSITE" id="PS51722">
    <property type="entry name" value="G_TR_2"/>
    <property type="match status" value="1"/>
</dbReference>
<name>EFG_DESHY</name>
<accession>Q250N5</accession>